<proteinExistence type="inferred from homology"/>
<protein>
    <recommendedName>
        <fullName evidence="1">UDP-N-acetylenolpyruvoylglucosamine reductase</fullName>
        <ecNumber evidence="1">1.3.1.98</ecNumber>
    </recommendedName>
    <alternativeName>
        <fullName evidence="1">UDP-N-acetylmuramate dehydrogenase</fullName>
    </alternativeName>
</protein>
<dbReference type="EC" id="1.3.1.98" evidence="1"/>
<dbReference type="EMBL" id="CP001083">
    <property type="protein sequence ID" value="ACQ51625.1"/>
    <property type="molecule type" value="Genomic_DNA"/>
</dbReference>
<dbReference type="RefSeq" id="WP_003360287.1">
    <property type="nucleotide sequence ID" value="NC_012658.1"/>
</dbReference>
<dbReference type="SMR" id="C3KV11"/>
<dbReference type="KEGG" id="cbi:CLJ_B3681"/>
<dbReference type="HOGENOM" id="CLU_035304_1_1_9"/>
<dbReference type="UniPathway" id="UPA00219"/>
<dbReference type="Proteomes" id="UP000002333">
    <property type="component" value="Chromosome"/>
</dbReference>
<dbReference type="GO" id="GO:0005829">
    <property type="term" value="C:cytosol"/>
    <property type="evidence" value="ECO:0007669"/>
    <property type="project" value="TreeGrafter"/>
</dbReference>
<dbReference type="GO" id="GO:0071949">
    <property type="term" value="F:FAD binding"/>
    <property type="evidence" value="ECO:0007669"/>
    <property type="project" value="InterPro"/>
</dbReference>
<dbReference type="GO" id="GO:0008762">
    <property type="term" value="F:UDP-N-acetylmuramate dehydrogenase activity"/>
    <property type="evidence" value="ECO:0007669"/>
    <property type="project" value="UniProtKB-UniRule"/>
</dbReference>
<dbReference type="GO" id="GO:0051301">
    <property type="term" value="P:cell division"/>
    <property type="evidence" value="ECO:0007669"/>
    <property type="project" value="UniProtKB-KW"/>
</dbReference>
<dbReference type="GO" id="GO:0071555">
    <property type="term" value="P:cell wall organization"/>
    <property type="evidence" value="ECO:0007669"/>
    <property type="project" value="UniProtKB-KW"/>
</dbReference>
<dbReference type="GO" id="GO:0009252">
    <property type="term" value="P:peptidoglycan biosynthetic process"/>
    <property type="evidence" value="ECO:0007669"/>
    <property type="project" value="UniProtKB-UniRule"/>
</dbReference>
<dbReference type="GO" id="GO:0008360">
    <property type="term" value="P:regulation of cell shape"/>
    <property type="evidence" value="ECO:0007669"/>
    <property type="project" value="UniProtKB-KW"/>
</dbReference>
<dbReference type="Gene3D" id="3.30.465.10">
    <property type="match status" value="1"/>
</dbReference>
<dbReference type="Gene3D" id="3.90.78.10">
    <property type="entry name" value="UDP-N-acetylenolpyruvoylglucosamine reductase, C-terminal domain"/>
    <property type="match status" value="1"/>
</dbReference>
<dbReference type="Gene3D" id="3.30.43.10">
    <property type="entry name" value="Uridine Diphospho-n-acetylenolpyruvylglucosamine Reductase, domain 2"/>
    <property type="match status" value="1"/>
</dbReference>
<dbReference type="HAMAP" id="MF_00037">
    <property type="entry name" value="MurB"/>
    <property type="match status" value="1"/>
</dbReference>
<dbReference type="InterPro" id="IPR016166">
    <property type="entry name" value="FAD-bd_PCMH"/>
</dbReference>
<dbReference type="InterPro" id="IPR036318">
    <property type="entry name" value="FAD-bd_PCMH-like_sf"/>
</dbReference>
<dbReference type="InterPro" id="IPR016167">
    <property type="entry name" value="FAD-bd_PCMH_sub1"/>
</dbReference>
<dbReference type="InterPro" id="IPR016169">
    <property type="entry name" value="FAD-bd_PCMH_sub2"/>
</dbReference>
<dbReference type="InterPro" id="IPR003170">
    <property type="entry name" value="MurB"/>
</dbReference>
<dbReference type="InterPro" id="IPR011601">
    <property type="entry name" value="MurB_C"/>
</dbReference>
<dbReference type="InterPro" id="IPR036635">
    <property type="entry name" value="MurB_C_sf"/>
</dbReference>
<dbReference type="InterPro" id="IPR006094">
    <property type="entry name" value="Oxid_FAD_bind_N"/>
</dbReference>
<dbReference type="NCBIfam" id="TIGR00179">
    <property type="entry name" value="murB"/>
    <property type="match status" value="1"/>
</dbReference>
<dbReference type="NCBIfam" id="NF010480">
    <property type="entry name" value="PRK13905.1"/>
    <property type="match status" value="1"/>
</dbReference>
<dbReference type="PANTHER" id="PTHR21071">
    <property type="entry name" value="UDP-N-ACETYLENOLPYRUVOYLGLUCOSAMINE REDUCTASE"/>
    <property type="match status" value="1"/>
</dbReference>
<dbReference type="PANTHER" id="PTHR21071:SF4">
    <property type="entry name" value="UDP-N-ACETYLENOLPYRUVOYLGLUCOSAMINE REDUCTASE"/>
    <property type="match status" value="1"/>
</dbReference>
<dbReference type="Pfam" id="PF01565">
    <property type="entry name" value="FAD_binding_4"/>
    <property type="match status" value="1"/>
</dbReference>
<dbReference type="Pfam" id="PF02873">
    <property type="entry name" value="MurB_C"/>
    <property type="match status" value="1"/>
</dbReference>
<dbReference type="SUPFAM" id="SSF56176">
    <property type="entry name" value="FAD-binding/transporter-associated domain-like"/>
    <property type="match status" value="1"/>
</dbReference>
<dbReference type="SUPFAM" id="SSF56194">
    <property type="entry name" value="Uridine diphospho-N-Acetylenolpyruvylglucosamine reductase, MurB, C-terminal domain"/>
    <property type="match status" value="1"/>
</dbReference>
<dbReference type="PROSITE" id="PS51387">
    <property type="entry name" value="FAD_PCMH"/>
    <property type="match status" value="1"/>
</dbReference>
<organism>
    <name type="scientific">Clostridium botulinum (strain 657 / Type Ba4)</name>
    <dbReference type="NCBI Taxonomy" id="515621"/>
    <lineage>
        <taxon>Bacteria</taxon>
        <taxon>Bacillati</taxon>
        <taxon>Bacillota</taxon>
        <taxon>Clostridia</taxon>
        <taxon>Eubacteriales</taxon>
        <taxon>Clostridiaceae</taxon>
        <taxon>Clostridium</taxon>
    </lineage>
</organism>
<comment type="function">
    <text evidence="1">Cell wall formation.</text>
</comment>
<comment type="catalytic activity">
    <reaction evidence="1">
        <text>UDP-N-acetyl-alpha-D-muramate + NADP(+) = UDP-N-acetyl-3-O-(1-carboxyvinyl)-alpha-D-glucosamine + NADPH + H(+)</text>
        <dbReference type="Rhea" id="RHEA:12248"/>
        <dbReference type="ChEBI" id="CHEBI:15378"/>
        <dbReference type="ChEBI" id="CHEBI:57783"/>
        <dbReference type="ChEBI" id="CHEBI:58349"/>
        <dbReference type="ChEBI" id="CHEBI:68483"/>
        <dbReference type="ChEBI" id="CHEBI:70757"/>
        <dbReference type="EC" id="1.3.1.98"/>
    </reaction>
</comment>
<comment type="cofactor">
    <cofactor evidence="1">
        <name>FAD</name>
        <dbReference type="ChEBI" id="CHEBI:57692"/>
    </cofactor>
</comment>
<comment type="pathway">
    <text evidence="1">Cell wall biogenesis; peptidoglycan biosynthesis.</text>
</comment>
<comment type="subcellular location">
    <subcellularLocation>
        <location evidence="1">Cytoplasm</location>
    </subcellularLocation>
</comment>
<comment type="similarity">
    <text evidence="1">Belongs to the MurB family.</text>
</comment>
<sequence length="306" mass="33686">MNQYKNFIMQFEDIVGNNNVLIDEPMKKHTSFKVGGPADLLITPTTLEQVKDSIILCRNNSIPYYIIGNGSNLLVRDGGIRGVVIKFLKLGDIKVEVDRVIAQSGAPLTNICNEALKSNLGGLEFACGIPGSVGGAVTMNAGAYNGEISQVIESAKVIDKDGNVFLLNKEQLDLGYRMSAIQKYHYIVLEVTFKLHNSEYDTIKNRIMDLNRRRTEKQPLEYPSAGSTFKRPEGHFAAKLIEDTGLKGKSIGGAQVSEKHSGFIINKGGATAGDILNLIEFVQNKVKEKFQVDLHTEVRIIGEENN</sequence>
<feature type="chain" id="PRO_1000202052" description="UDP-N-acetylenolpyruvoylglucosamine reductase">
    <location>
        <begin position="1"/>
        <end position="306"/>
    </location>
</feature>
<feature type="domain" description="FAD-binding PCMH-type" evidence="1">
    <location>
        <begin position="34"/>
        <end position="198"/>
    </location>
</feature>
<feature type="active site" evidence="1">
    <location>
        <position position="177"/>
    </location>
</feature>
<feature type="active site" description="Proton donor" evidence="1">
    <location>
        <position position="227"/>
    </location>
</feature>
<feature type="active site" evidence="1">
    <location>
        <position position="297"/>
    </location>
</feature>
<gene>
    <name evidence="1" type="primary">murB</name>
    <name type="ordered locus">CLJ_B3681</name>
</gene>
<accession>C3KV11</accession>
<name>MURB_CLOB6</name>
<reference key="1">
    <citation type="submission" date="2008-05" db="EMBL/GenBank/DDBJ databases">
        <title>Genome sequence of Clostridium botulinum Ba4 strain 657.</title>
        <authorList>
            <person name="Shrivastava S."/>
            <person name="Brown J.L."/>
            <person name="Bruce D."/>
            <person name="Detter C."/>
            <person name="Munk C."/>
            <person name="Smith L.A."/>
            <person name="Smith T.J."/>
            <person name="Sutton G."/>
            <person name="Brettin T.S."/>
        </authorList>
    </citation>
    <scope>NUCLEOTIDE SEQUENCE [LARGE SCALE GENOMIC DNA]</scope>
    <source>
        <strain>657 / Type Ba4</strain>
    </source>
</reference>
<evidence type="ECO:0000255" key="1">
    <source>
        <dbReference type="HAMAP-Rule" id="MF_00037"/>
    </source>
</evidence>
<keyword id="KW-0131">Cell cycle</keyword>
<keyword id="KW-0132">Cell division</keyword>
<keyword id="KW-0133">Cell shape</keyword>
<keyword id="KW-0961">Cell wall biogenesis/degradation</keyword>
<keyword id="KW-0963">Cytoplasm</keyword>
<keyword id="KW-0274">FAD</keyword>
<keyword id="KW-0285">Flavoprotein</keyword>
<keyword id="KW-0521">NADP</keyword>
<keyword id="KW-0560">Oxidoreductase</keyword>
<keyword id="KW-0573">Peptidoglycan synthesis</keyword>